<protein>
    <recommendedName>
        <fullName>Uncharacterized protein 399</fullName>
    </recommendedName>
</protein>
<comment type="function">
    <text>Putative amino acid transporter.</text>
</comment>
<comment type="subcellular location">
    <subcellularLocation>
        <location evidence="2">Host membrane</location>
        <topology evidence="2">Multi-pass membrane protein</topology>
    </subcellularLocation>
</comment>
<organismHost>
    <name type="scientific">Saccharolobus islandicus</name>
    <name type="common">Sulfolobus islandicus</name>
    <dbReference type="NCBI Taxonomy" id="43080"/>
</organismHost>
<feature type="chain" id="PRO_0000342325" description="Uncharacterized protein 399">
    <location>
        <begin position="1"/>
        <end position="399"/>
    </location>
</feature>
<feature type="transmembrane region" description="Helical" evidence="1">
    <location>
        <begin position="19"/>
        <end position="39"/>
    </location>
</feature>
<feature type="transmembrane region" description="Helical" evidence="1">
    <location>
        <begin position="46"/>
        <end position="66"/>
    </location>
</feature>
<feature type="transmembrane region" description="Helical" evidence="1">
    <location>
        <begin position="91"/>
        <end position="111"/>
    </location>
</feature>
<feature type="transmembrane region" description="Helical" evidence="1">
    <location>
        <begin position="123"/>
        <end position="143"/>
    </location>
</feature>
<feature type="transmembrane region" description="Helical" evidence="1">
    <location>
        <begin position="146"/>
        <end position="166"/>
    </location>
</feature>
<feature type="transmembrane region" description="Helical" evidence="1">
    <location>
        <begin position="183"/>
        <end position="203"/>
    </location>
</feature>
<feature type="transmembrane region" description="Helical" evidence="1">
    <location>
        <begin position="225"/>
        <end position="247"/>
    </location>
</feature>
<feature type="transmembrane region" description="Helical" evidence="1">
    <location>
        <begin position="283"/>
        <end position="303"/>
    </location>
</feature>
<feature type="transmembrane region" description="Helical" evidence="1">
    <location>
        <begin position="307"/>
        <end position="327"/>
    </location>
</feature>
<feature type="transmembrane region" description="Helical" evidence="1">
    <location>
        <begin position="335"/>
        <end position="355"/>
    </location>
</feature>
<feature type="transmembrane region" description="Helical" evidence="1">
    <location>
        <begin position="369"/>
        <end position="389"/>
    </location>
</feature>
<keyword id="KW-0029">Amino-acid transport</keyword>
<keyword id="KW-1043">Host membrane</keyword>
<keyword id="KW-0472">Membrane</keyword>
<keyword id="KW-1185">Reference proteome</keyword>
<keyword id="KW-0812">Transmembrane</keyword>
<keyword id="KW-1133">Transmembrane helix</keyword>
<keyword id="KW-0813">Transport</keyword>
<gene>
    <name type="ORF">399</name>
</gene>
<name>Y399_SIRV1</name>
<accession>Q8QL47</accession>
<accession>Q5TJB1</accession>
<organism>
    <name type="scientific">Sulfolobus islandicus rod-shaped virus 1</name>
    <name type="common">SIRV-1</name>
    <name type="synonym">Sulfolobus virus SIRV-1</name>
    <dbReference type="NCBI Taxonomy" id="157898"/>
    <lineage>
        <taxon>Viruses</taxon>
        <taxon>Adnaviria</taxon>
        <taxon>Zilligvirae</taxon>
        <taxon>Taleaviricota</taxon>
        <taxon>Tokiviricetes</taxon>
        <taxon>Ligamenvirales</taxon>
        <taxon>Rudiviridae</taxon>
        <taxon>Icerudivirus</taxon>
        <taxon>Icerudivirus SIRV1</taxon>
    </lineage>
</organism>
<reference key="1">
    <citation type="journal article" date="2001" name="Virology">
        <title>Sequences and replication of genomes of the archaeal rudiviruses SIRV1 and SIRV2: relationships to the archaeal lipothrixvirus SIFV and some eukaryal viruses.</title>
        <authorList>
            <person name="Peng X."/>
            <person name="Blum H."/>
            <person name="She Q."/>
            <person name="Mallok S."/>
            <person name="Bruegger K."/>
            <person name="Garrett R.A."/>
            <person name="Zillig W."/>
            <person name="Prangishvili D."/>
        </authorList>
    </citation>
    <scope>NUCLEOTIDE SEQUENCE [LARGE SCALE GENOMIC DNA]</scope>
    <source>
        <strain>Isolate variant VIII</strain>
    </source>
</reference>
<reference key="2">
    <citation type="journal article" date="2004" name="Mol. Microbiol.">
        <title>Multiple variants of the archaeal DNA rudivirus SIRV1 in a single host and a novel mechanism of genomic variation.</title>
        <authorList>
            <person name="Peng X."/>
            <person name="Kessler A."/>
            <person name="Phan H."/>
            <person name="Garrett R.A."/>
            <person name="Prangishvili D."/>
        </authorList>
    </citation>
    <scope>NUCLEOTIDE SEQUENCE [LARGE SCALE GENOMIC DNA]</scope>
    <source>
        <strain>Isolate variant XX</strain>
    </source>
</reference>
<sequence>MELERKSSGIIKSFNVLDIFSINLLYMGILSGISYPLFVSSLMKNVNLLFAIVIGAVFEIPLLLMYYKLTTKFPLNGGDYAYIRTAFSSKFYTIFGISLWLTYVLSQPILGDLVLLNFNIQNQFEQFLIVESLFPLVLLIIASKRIYAKIVDILAIFQIIIAIFIAFKSFNYQYQTFTISNTLLSALLFDLSAFIFINAISYIAGEIKNIKKSSMIGYFVSYGVVAILSILDSYSNLNILFALMPIWFFSYMPIANKIQSRLIQTMSFDKVLPEKFSKINPNVLLLIFSTETIANVLENLLGFNISFGLDGLLFIFWNFIIVAFAYLKLMNDKKLFSIVLTSLAIQIFLFFYLGYQNPIFYKFVIAGNIEYTILRIMILPIIGAIVYLLRKSKINVIPK</sequence>
<evidence type="ECO:0000255" key="1"/>
<evidence type="ECO:0000305" key="2"/>
<proteinExistence type="predicted"/>
<dbReference type="EMBL" id="AJ414696">
    <property type="protein sequence ID" value="CAC93962.1"/>
    <property type="molecule type" value="Genomic_DNA"/>
</dbReference>
<dbReference type="EMBL" id="AJ748296">
    <property type="protein sequence ID" value="CAG38827.1"/>
    <property type="molecule type" value="Genomic_DNA"/>
</dbReference>
<dbReference type="RefSeq" id="NP_666595.1">
    <property type="nucleotide sequence ID" value="NC_004087.1"/>
</dbReference>
<dbReference type="SMR" id="Q8QL47"/>
<dbReference type="KEGG" id="vg:951384"/>
<dbReference type="OrthoDB" id="5258at10239"/>
<dbReference type="Proteomes" id="UP000002270">
    <property type="component" value="Genome"/>
</dbReference>
<dbReference type="Proteomes" id="UP000223181">
    <property type="component" value="Segment"/>
</dbReference>
<dbReference type="GO" id="GO:0033644">
    <property type="term" value="C:host cell membrane"/>
    <property type="evidence" value="ECO:0007669"/>
    <property type="project" value="UniProtKB-SubCell"/>
</dbReference>
<dbReference type="GO" id="GO:0016020">
    <property type="term" value="C:membrane"/>
    <property type="evidence" value="ECO:0007669"/>
    <property type="project" value="UniProtKB-KW"/>
</dbReference>
<dbReference type="GO" id="GO:0006865">
    <property type="term" value="P:amino acid transport"/>
    <property type="evidence" value="ECO:0007669"/>
    <property type="project" value="UniProtKB-KW"/>
</dbReference>
<dbReference type="Gene3D" id="1.20.1740.10">
    <property type="entry name" value="Amino acid/polyamine transporter I"/>
    <property type="match status" value="1"/>
</dbReference>
<dbReference type="InterPro" id="IPR050367">
    <property type="entry name" value="APC_superfamily"/>
</dbReference>
<dbReference type="PANTHER" id="PTHR42770">
    <property type="entry name" value="AMINO ACID TRANSPORTER-RELATED"/>
    <property type="match status" value="1"/>
</dbReference>
<dbReference type="PANTHER" id="PTHR42770:SF7">
    <property type="entry name" value="MEMBRANE PROTEIN"/>
    <property type="match status" value="1"/>
</dbReference>
<dbReference type="PIRSF" id="PIRSF006060">
    <property type="entry name" value="AA_transporter"/>
    <property type="match status" value="1"/>
</dbReference>